<protein>
    <recommendedName>
        <fullName>Uncharacterized protein CP312R</fullName>
        <shortName>pCP312R</shortName>
    </recommendedName>
</protein>
<reference key="1">
    <citation type="submission" date="2003-03" db="EMBL/GenBank/DDBJ databases">
        <title>African swine fever virus genomes.</title>
        <authorList>
            <person name="Kutish G.F."/>
            <person name="Rock D.L."/>
        </authorList>
    </citation>
    <scope>NUCLEOTIDE SEQUENCE [LARGE SCALE GENOMIC DNA]</scope>
</reference>
<comment type="subcellular location">
    <subcellularLocation>
        <location evidence="1">Virion</location>
    </subcellularLocation>
</comment>
<comment type="induction">
    <text evidence="2">Expressed in the early phase of the viral replicative cycle.</text>
</comment>
<comment type="similarity">
    <text evidence="2">Belongs to the asfivirus CP312R family.</text>
</comment>
<evidence type="ECO:0000250" key="1">
    <source>
        <dbReference type="UniProtKB" id="Q65180"/>
    </source>
</evidence>
<evidence type="ECO:0000305" key="2"/>
<accession>P0CAD4</accession>
<feature type="chain" id="PRO_0000373638" description="Uncharacterized protein CP312R">
    <location>
        <begin position="1"/>
        <end position="312"/>
    </location>
</feature>
<sequence length="312" mass="35101">MLLVKMTTHIFNADDLLQALQQAKAEKNFSSVFSLDWNKLRTAKRNTSVKYVTVYVIIKGKKAPLMFNFQNEKHVGTIPPSTDEEVIRMNAENPKFLVKKRDRDPCLQFNKYKISPPLEDDGLTVKKNEQGEEIYPGDEEKSKLFQIIELLEEAFEDAVQKGPETMKTKHVIKLIQRKISNSAAKNADKPLPNPIARIRIKINSGTNILTPILLNKSKPITLQNGKTSFEELKDEDGVKANPDNIHKLIESHSIHDGIINARSICISNMGISFPLCLEMGVVKVFEKNNGIDVDSIYSSDDISTLVNQIAIA</sequence>
<organism>
    <name type="scientific">African swine fever virus (isolate Warthog/Namibia/Wart80/1980)</name>
    <name type="common">ASFV</name>
    <dbReference type="NCBI Taxonomy" id="561444"/>
    <lineage>
        <taxon>Viruses</taxon>
        <taxon>Varidnaviria</taxon>
        <taxon>Bamfordvirae</taxon>
        <taxon>Nucleocytoviricota</taxon>
        <taxon>Pokkesviricetes</taxon>
        <taxon>Asfuvirales</taxon>
        <taxon>Asfarviridae</taxon>
        <taxon>Asfivirus</taxon>
        <taxon>African swine fever virus</taxon>
    </lineage>
</organism>
<name>VF312_ASFWA</name>
<keyword id="KW-0244">Early protein</keyword>
<keyword id="KW-0946">Virion</keyword>
<dbReference type="EMBL" id="AY261366">
    <property type="status" value="NOT_ANNOTATED_CDS"/>
    <property type="molecule type" value="Genomic_DNA"/>
</dbReference>
<dbReference type="SMR" id="P0CAD4"/>
<dbReference type="Proteomes" id="UP000000858">
    <property type="component" value="Segment"/>
</dbReference>
<dbReference type="GO" id="GO:0044423">
    <property type="term" value="C:virion component"/>
    <property type="evidence" value="ECO:0007669"/>
    <property type="project" value="UniProtKB-KW"/>
</dbReference>
<gene>
    <name type="ordered locus">War-106</name>
</gene>
<organismHost>
    <name type="scientific">Ornithodoros</name>
    <name type="common">relapsing fever ticks</name>
    <dbReference type="NCBI Taxonomy" id="6937"/>
</organismHost>
<organismHost>
    <name type="scientific">Phacochoerus aethiopicus</name>
    <name type="common">Warthog</name>
    <dbReference type="NCBI Taxonomy" id="85517"/>
</organismHost>
<organismHost>
    <name type="scientific">Phacochoerus africanus</name>
    <name type="common">Warthog</name>
    <dbReference type="NCBI Taxonomy" id="41426"/>
</organismHost>
<organismHost>
    <name type="scientific">Potamochoerus larvatus</name>
    <name type="common">Bushpig</name>
    <dbReference type="NCBI Taxonomy" id="273792"/>
</organismHost>
<organismHost>
    <name type="scientific">Sus scrofa</name>
    <name type="common">Pig</name>
    <dbReference type="NCBI Taxonomy" id="9823"/>
</organismHost>
<proteinExistence type="inferred from homology"/>